<comment type="function">
    <text evidence="1">Catalyzes the reversible adenylation of nicotinate mononucleotide (NaMN) to nicotinic acid adenine dinucleotide (NaAD).</text>
</comment>
<comment type="catalytic activity">
    <reaction evidence="1">
        <text>nicotinate beta-D-ribonucleotide + ATP + H(+) = deamido-NAD(+) + diphosphate</text>
        <dbReference type="Rhea" id="RHEA:22860"/>
        <dbReference type="ChEBI" id="CHEBI:15378"/>
        <dbReference type="ChEBI" id="CHEBI:30616"/>
        <dbReference type="ChEBI" id="CHEBI:33019"/>
        <dbReference type="ChEBI" id="CHEBI:57502"/>
        <dbReference type="ChEBI" id="CHEBI:58437"/>
        <dbReference type="EC" id="2.7.7.18"/>
    </reaction>
</comment>
<comment type="pathway">
    <text evidence="1">Cofactor biosynthesis; NAD(+) biosynthesis; deamido-NAD(+) from nicotinate D-ribonucleotide: step 1/1.</text>
</comment>
<comment type="similarity">
    <text evidence="1">Belongs to the NadD family.</text>
</comment>
<protein>
    <recommendedName>
        <fullName evidence="1">Probable nicotinate-nucleotide adenylyltransferase</fullName>
        <ecNumber evidence="1">2.7.7.18</ecNumber>
    </recommendedName>
    <alternativeName>
        <fullName evidence="1">Deamido-NAD(+) diphosphorylase</fullName>
    </alternativeName>
    <alternativeName>
        <fullName evidence="1">Deamido-NAD(+) pyrophosphorylase</fullName>
    </alternativeName>
    <alternativeName>
        <fullName evidence="1">Nicotinate mononucleotide adenylyltransferase</fullName>
        <shortName evidence="1">NaMN adenylyltransferase</shortName>
    </alternativeName>
</protein>
<gene>
    <name evidence="1" type="primary">nadD</name>
    <name type="ordered locus">Tpet_0827</name>
</gene>
<keyword id="KW-0067">ATP-binding</keyword>
<keyword id="KW-0520">NAD</keyword>
<keyword id="KW-0547">Nucleotide-binding</keyword>
<keyword id="KW-0548">Nucleotidyltransferase</keyword>
<keyword id="KW-0662">Pyridine nucleotide biosynthesis</keyword>
<keyword id="KW-0808">Transferase</keyword>
<organism>
    <name type="scientific">Thermotoga petrophila (strain ATCC BAA-488 / DSM 13995 / JCM 10881 / RKU-1)</name>
    <dbReference type="NCBI Taxonomy" id="390874"/>
    <lineage>
        <taxon>Bacteria</taxon>
        <taxon>Thermotogati</taxon>
        <taxon>Thermotogota</taxon>
        <taxon>Thermotogae</taxon>
        <taxon>Thermotogales</taxon>
        <taxon>Thermotogaceae</taxon>
        <taxon>Thermotoga</taxon>
    </lineage>
</organism>
<reference key="1">
    <citation type="submission" date="2007-05" db="EMBL/GenBank/DDBJ databases">
        <title>Complete sequence of Thermotoga petrophila RKU-1.</title>
        <authorList>
            <consortium name="US DOE Joint Genome Institute"/>
            <person name="Copeland A."/>
            <person name="Lucas S."/>
            <person name="Lapidus A."/>
            <person name="Barry K."/>
            <person name="Glavina del Rio T."/>
            <person name="Dalin E."/>
            <person name="Tice H."/>
            <person name="Pitluck S."/>
            <person name="Sims D."/>
            <person name="Brettin T."/>
            <person name="Bruce D."/>
            <person name="Detter J.C."/>
            <person name="Han C."/>
            <person name="Tapia R."/>
            <person name="Schmutz J."/>
            <person name="Larimer F."/>
            <person name="Land M."/>
            <person name="Hauser L."/>
            <person name="Kyrpides N."/>
            <person name="Mikhailova N."/>
            <person name="Nelson K."/>
            <person name="Gogarten J.P."/>
            <person name="Noll K."/>
            <person name="Richardson P."/>
        </authorList>
    </citation>
    <scope>NUCLEOTIDE SEQUENCE [LARGE SCALE GENOMIC DNA]</scope>
    <source>
        <strain>ATCC BAA-488 / DSM 13995 / JCM 10881 / RKU-1</strain>
    </source>
</reference>
<dbReference type="EC" id="2.7.7.18" evidence="1"/>
<dbReference type="EMBL" id="CP000702">
    <property type="protein sequence ID" value="ABQ46846.1"/>
    <property type="molecule type" value="Genomic_DNA"/>
</dbReference>
<dbReference type="SMR" id="A5IKX3"/>
<dbReference type="STRING" id="390874.Tpet_0827"/>
<dbReference type="KEGG" id="tpt:Tpet_0827"/>
<dbReference type="eggNOG" id="COG1057">
    <property type="taxonomic scope" value="Bacteria"/>
</dbReference>
<dbReference type="HOGENOM" id="CLU_069765_3_2_0"/>
<dbReference type="UniPathway" id="UPA00253">
    <property type="reaction ID" value="UER00332"/>
</dbReference>
<dbReference type="Proteomes" id="UP000006558">
    <property type="component" value="Chromosome"/>
</dbReference>
<dbReference type="GO" id="GO:0005524">
    <property type="term" value="F:ATP binding"/>
    <property type="evidence" value="ECO:0007669"/>
    <property type="project" value="UniProtKB-KW"/>
</dbReference>
<dbReference type="GO" id="GO:0004515">
    <property type="term" value="F:nicotinate-nucleotide adenylyltransferase activity"/>
    <property type="evidence" value="ECO:0007669"/>
    <property type="project" value="UniProtKB-UniRule"/>
</dbReference>
<dbReference type="GO" id="GO:0009435">
    <property type="term" value="P:NAD biosynthetic process"/>
    <property type="evidence" value="ECO:0007669"/>
    <property type="project" value="UniProtKB-UniRule"/>
</dbReference>
<dbReference type="CDD" id="cd02165">
    <property type="entry name" value="NMNAT"/>
    <property type="match status" value="1"/>
</dbReference>
<dbReference type="Gene3D" id="3.40.50.620">
    <property type="entry name" value="HUPs"/>
    <property type="match status" value="1"/>
</dbReference>
<dbReference type="HAMAP" id="MF_00244">
    <property type="entry name" value="NaMN_adenylyltr"/>
    <property type="match status" value="1"/>
</dbReference>
<dbReference type="InterPro" id="IPR004821">
    <property type="entry name" value="Cyt_trans-like"/>
</dbReference>
<dbReference type="InterPro" id="IPR005248">
    <property type="entry name" value="NadD/NMNAT"/>
</dbReference>
<dbReference type="InterPro" id="IPR014729">
    <property type="entry name" value="Rossmann-like_a/b/a_fold"/>
</dbReference>
<dbReference type="NCBIfam" id="TIGR00125">
    <property type="entry name" value="cyt_tran_rel"/>
    <property type="match status" value="1"/>
</dbReference>
<dbReference type="NCBIfam" id="TIGR00482">
    <property type="entry name" value="nicotinate (nicotinamide) nucleotide adenylyltransferase"/>
    <property type="match status" value="1"/>
</dbReference>
<dbReference type="PANTHER" id="PTHR39321">
    <property type="entry name" value="NICOTINATE-NUCLEOTIDE ADENYLYLTRANSFERASE-RELATED"/>
    <property type="match status" value="1"/>
</dbReference>
<dbReference type="PANTHER" id="PTHR39321:SF3">
    <property type="entry name" value="PHOSPHOPANTETHEINE ADENYLYLTRANSFERASE"/>
    <property type="match status" value="1"/>
</dbReference>
<dbReference type="Pfam" id="PF01467">
    <property type="entry name" value="CTP_transf_like"/>
    <property type="match status" value="1"/>
</dbReference>
<dbReference type="SUPFAM" id="SSF52374">
    <property type="entry name" value="Nucleotidylyl transferase"/>
    <property type="match status" value="1"/>
</dbReference>
<evidence type="ECO:0000255" key="1">
    <source>
        <dbReference type="HAMAP-Rule" id="MF_00244"/>
    </source>
</evidence>
<feature type="chain" id="PRO_1000058997" description="Probable nicotinate-nucleotide adenylyltransferase">
    <location>
        <begin position="1"/>
        <end position="196"/>
    </location>
</feature>
<name>NADD_THEP1</name>
<proteinExistence type="inferred from homology"/>
<accession>A5IKX3</accession>
<sequence length="196" mass="22833">MNTGNRIGIFGGSFDPIHTGHVLVSVYTLEILDLDRLIVVPVFNPPHKKTVAPFEKRFEWLKKVFEGMEKVEVSDYEKGRGGVSYSIFTIEYFSEIYKTKPFFIVGEDALSYFEKWYRYRDILEKSTLVVYPRYCGKPYHEHARRVLGDLSEIVFLDMPIVQISSTEIRERARIGKTLKGFVPEEIREEVEVFYGA</sequence>